<reference key="1">
    <citation type="journal article" date="2001" name="J. Bacteriol.">
        <title>Genome sequence and comparative analysis of the solvent-producing bacterium Clostridium acetobutylicum.</title>
        <authorList>
            <person name="Noelling J."/>
            <person name="Breton G."/>
            <person name="Omelchenko M.V."/>
            <person name="Makarova K.S."/>
            <person name="Zeng Q."/>
            <person name="Gibson R."/>
            <person name="Lee H.M."/>
            <person name="Dubois J."/>
            <person name="Qiu D."/>
            <person name="Hitti J."/>
            <person name="Wolf Y.I."/>
            <person name="Tatusov R.L."/>
            <person name="Sabathe F."/>
            <person name="Doucette-Stamm L.A."/>
            <person name="Soucaille P."/>
            <person name="Daly M.J."/>
            <person name="Bennett G.N."/>
            <person name="Koonin E.V."/>
            <person name="Smith D.R."/>
        </authorList>
    </citation>
    <scope>NUCLEOTIDE SEQUENCE [LARGE SCALE GENOMIC DNA]</scope>
    <source>
        <strain>ATCC 824 / DSM 792 / JCM 1419 / IAM 19013 / LMG 5710 / NBRC 13948 / NRRL B-527 / VKM B-1787 / 2291 / W</strain>
    </source>
</reference>
<name>GATB1_CLOAB</name>
<protein>
    <recommendedName>
        <fullName>Aspartyl/glutamyl-tRNA(Asn/Gln) amidotransferase subunit B 1</fullName>
        <shortName>Asp/Glu-ADT subunit B 1</shortName>
        <ecNumber>6.3.5.-</ecNumber>
    </recommendedName>
</protein>
<organism>
    <name type="scientific">Clostridium acetobutylicum (strain ATCC 824 / DSM 792 / JCM 1419 / IAM 19013 / LMG 5710 / NBRC 13948 / NRRL B-527 / VKM B-1787 / 2291 / W)</name>
    <dbReference type="NCBI Taxonomy" id="272562"/>
    <lineage>
        <taxon>Bacteria</taxon>
        <taxon>Bacillati</taxon>
        <taxon>Bacillota</taxon>
        <taxon>Clostridia</taxon>
        <taxon>Eubacteriales</taxon>
        <taxon>Clostridiaceae</taxon>
        <taxon>Clostridium</taxon>
    </lineage>
</organism>
<dbReference type="EC" id="6.3.5.-"/>
<dbReference type="EMBL" id="AE001437">
    <property type="protein sequence ID" value="AAK80616.1"/>
    <property type="molecule type" value="Genomic_DNA"/>
</dbReference>
<dbReference type="PIR" id="E97228">
    <property type="entry name" value="E97228"/>
</dbReference>
<dbReference type="RefSeq" id="NP_349276.1">
    <property type="nucleotide sequence ID" value="NC_003030.1"/>
</dbReference>
<dbReference type="SMR" id="Q97FQ8"/>
<dbReference type="STRING" id="272562.CA_C2669"/>
<dbReference type="DNASU" id="1118852"/>
<dbReference type="KEGG" id="cac:CA_C2669"/>
<dbReference type="PATRIC" id="fig|272562.8.peg.2859"/>
<dbReference type="eggNOG" id="COG0064">
    <property type="taxonomic scope" value="Bacteria"/>
</dbReference>
<dbReference type="HOGENOM" id="CLU_019240_0_0_9"/>
<dbReference type="OrthoDB" id="9804078at2"/>
<dbReference type="Proteomes" id="UP000000814">
    <property type="component" value="Chromosome"/>
</dbReference>
<dbReference type="GO" id="GO:0050566">
    <property type="term" value="F:asparaginyl-tRNA synthase (glutamine-hydrolyzing) activity"/>
    <property type="evidence" value="ECO:0007669"/>
    <property type="project" value="RHEA"/>
</dbReference>
<dbReference type="GO" id="GO:0005524">
    <property type="term" value="F:ATP binding"/>
    <property type="evidence" value="ECO:0007669"/>
    <property type="project" value="UniProtKB-KW"/>
</dbReference>
<dbReference type="GO" id="GO:0050567">
    <property type="term" value="F:glutaminyl-tRNA synthase (glutamine-hydrolyzing) activity"/>
    <property type="evidence" value="ECO:0007669"/>
    <property type="project" value="UniProtKB-UniRule"/>
</dbReference>
<dbReference type="GO" id="GO:0070681">
    <property type="term" value="P:glutaminyl-tRNAGln biosynthesis via transamidation"/>
    <property type="evidence" value="ECO:0007669"/>
    <property type="project" value="TreeGrafter"/>
</dbReference>
<dbReference type="GO" id="GO:0006412">
    <property type="term" value="P:translation"/>
    <property type="evidence" value="ECO:0007669"/>
    <property type="project" value="UniProtKB-UniRule"/>
</dbReference>
<dbReference type="FunFam" id="1.10.10.410:FF:000001">
    <property type="entry name" value="Aspartyl/glutamyl-tRNA(Asn/Gln) amidotransferase subunit B"/>
    <property type="match status" value="1"/>
</dbReference>
<dbReference type="FunFam" id="1.10.150.380:FF:000001">
    <property type="entry name" value="Aspartyl/glutamyl-tRNA(Asn/Gln) amidotransferase subunit B"/>
    <property type="match status" value="1"/>
</dbReference>
<dbReference type="Gene3D" id="1.10.10.410">
    <property type="match status" value="1"/>
</dbReference>
<dbReference type="Gene3D" id="1.10.150.380">
    <property type="entry name" value="GatB domain, N-terminal subdomain"/>
    <property type="match status" value="1"/>
</dbReference>
<dbReference type="HAMAP" id="MF_00121">
    <property type="entry name" value="GatB"/>
    <property type="match status" value="1"/>
</dbReference>
<dbReference type="InterPro" id="IPR017959">
    <property type="entry name" value="Asn/Gln-tRNA_amidoTrfase_suB/E"/>
</dbReference>
<dbReference type="InterPro" id="IPR006075">
    <property type="entry name" value="Asn/Gln-tRNA_Trfase_suB/E_cat"/>
</dbReference>
<dbReference type="InterPro" id="IPR018027">
    <property type="entry name" value="Asn/Gln_amidotransferase"/>
</dbReference>
<dbReference type="InterPro" id="IPR003789">
    <property type="entry name" value="Asn/Gln_tRNA_amidoTrase-B-like"/>
</dbReference>
<dbReference type="InterPro" id="IPR004413">
    <property type="entry name" value="GatB"/>
</dbReference>
<dbReference type="InterPro" id="IPR042114">
    <property type="entry name" value="GatB_C_1"/>
</dbReference>
<dbReference type="InterPro" id="IPR023168">
    <property type="entry name" value="GatB_Yqey_C_2"/>
</dbReference>
<dbReference type="InterPro" id="IPR017958">
    <property type="entry name" value="Gln-tRNA_amidoTrfase_suB_CS"/>
</dbReference>
<dbReference type="InterPro" id="IPR014746">
    <property type="entry name" value="Gln_synth/guanido_kin_cat_dom"/>
</dbReference>
<dbReference type="NCBIfam" id="TIGR00133">
    <property type="entry name" value="gatB"/>
    <property type="match status" value="1"/>
</dbReference>
<dbReference type="NCBIfam" id="NF004012">
    <property type="entry name" value="PRK05477.1-2"/>
    <property type="match status" value="1"/>
</dbReference>
<dbReference type="NCBIfam" id="NF004014">
    <property type="entry name" value="PRK05477.1-4"/>
    <property type="match status" value="1"/>
</dbReference>
<dbReference type="PANTHER" id="PTHR11659">
    <property type="entry name" value="GLUTAMYL-TRNA GLN AMIDOTRANSFERASE SUBUNIT B MITOCHONDRIAL AND PROKARYOTIC PET112-RELATED"/>
    <property type="match status" value="1"/>
</dbReference>
<dbReference type="PANTHER" id="PTHR11659:SF0">
    <property type="entry name" value="GLUTAMYL-TRNA(GLN) AMIDOTRANSFERASE SUBUNIT B, MITOCHONDRIAL"/>
    <property type="match status" value="1"/>
</dbReference>
<dbReference type="Pfam" id="PF02934">
    <property type="entry name" value="GatB_N"/>
    <property type="match status" value="1"/>
</dbReference>
<dbReference type="Pfam" id="PF02637">
    <property type="entry name" value="GatB_Yqey"/>
    <property type="match status" value="1"/>
</dbReference>
<dbReference type="SMART" id="SM00845">
    <property type="entry name" value="GatB_Yqey"/>
    <property type="match status" value="1"/>
</dbReference>
<dbReference type="SUPFAM" id="SSF89095">
    <property type="entry name" value="GatB/YqeY motif"/>
    <property type="match status" value="1"/>
</dbReference>
<dbReference type="SUPFAM" id="SSF55931">
    <property type="entry name" value="Glutamine synthetase/guanido kinase"/>
    <property type="match status" value="1"/>
</dbReference>
<dbReference type="PROSITE" id="PS01234">
    <property type="entry name" value="GATB"/>
    <property type="match status" value="1"/>
</dbReference>
<accession>Q97FQ8</accession>
<comment type="function">
    <text evidence="1">Allows the formation of correctly charged Asn-tRNA(Asn) or Gln-tRNA(Gln) through the transamidation of misacylated Asp-tRNA(Asn) or Glu-tRNA(Gln) in organisms which lack either or both of asparaginyl-tRNA or glutaminyl-tRNA synthetases. The reaction takes place in the presence of glutamine and ATP through an activated phospho-Asp-tRNA(Asn) or phospho-Glu-tRNA(Gln) (By similarity).</text>
</comment>
<comment type="catalytic activity">
    <reaction>
        <text>L-glutamyl-tRNA(Gln) + L-glutamine + ATP + H2O = L-glutaminyl-tRNA(Gln) + L-glutamate + ADP + phosphate + H(+)</text>
        <dbReference type="Rhea" id="RHEA:17521"/>
        <dbReference type="Rhea" id="RHEA-COMP:9681"/>
        <dbReference type="Rhea" id="RHEA-COMP:9684"/>
        <dbReference type="ChEBI" id="CHEBI:15377"/>
        <dbReference type="ChEBI" id="CHEBI:15378"/>
        <dbReference type="ChEBI" id="CHEBI:29985"/>
        <dbReference type="ChEBI" id="CHEBI:30616"/>
        <dbReference type="ChEBI" id="CHEBI:43474"/>
        <dbReference type="ChEBI" id="CHEBI:58359"/>
        <dbReference type="ChEBI" id="CHEBI:78520"/>
        <dbReference type="ChEBI" id="CHEBI:78521"/>
        <dbReference type="ChEBI" id="CHEBI:456216"/>
    </reaction>
</comment>
<comment type="catalytic activity">
    <reaction>
        <text>L-aspartyl-tRNA(Asn) + L-glutamine + ATP + H2O = L-asparaginyl-tRNA(Asn) + L-glutamate + ADP + phosphate + 2 H(+)</text>
        <dbReference type="Rhea" id="RHEA:14513"/>
        <dbReference type="Rhea" id="RHEA-COMP:9674"/>
        <dbReference type="Rhea" id="RHEA-COMP:9677"/>
        <dbReference type="ChEBI" id="CHEBI:15377"/>
        <dbReference type="ChEBI" id="CHEBI:15378"/>
        <dbReference type="ChEBI" id="CHEBI:29985"/>
        <dbReference type="ChEBI" id="CHEBI:30616"/>
        <dbReference type="ChEBI" id="CHEBI:43474"/>
        <dbReference type="ChEBI" id="CHEBI:58359"/>
        <dbReference type="ChEBI" id="CHEBI:78515"/>
        <dbReference type="ChEBI" id="CHEBI:78516"/>
        <dbReference type="ChEBI" id="CHEBI:456216"/>
    </reaction>
</comment>
<comment type="subunit">
    <text evidence="1">Heterotrimer of A, B and C subunits.</text>
</comment>
<comment type="similarity">
    <text evidence="2">Belongs to the GatB/GatE family. GatB subfamily.</text>
</comment>
<feature type="chain" id="PRO_0000148781" description="Aspartyl/glutamyl-tRNA(Asn/Gln) amidotransferase subunit B 1">
    <location>
        <begin position="1"/>
        <end position="476"/>
    </location>
</feature>
<gene>
    <name type="primary">gatB1</name>
    <name type="ordered locus">CA_C2669</name>
</gene>
<evidence type="ECO:0000250" key="1"/>
<evidence type="ECO:0000305" key="2"/>
<proteinExistence type="inferred from homology"/>
<keyword id="KW-0067">ATP-binding</keyword>
<keyword id="KW-0436">Ligase</keyword>
<keyword id="KW-0547">Nucleotide-binding</keyword>
<keyword id="KW-0648">Protein biosynthesis</keyword>
<keyword id="KW-1185">Reference proteome</keyword>
<sequence length="476" mass="53841">MEYEIVIGLEVHAELATKTKMYCGCTAEFGGQPNTHVCPVCMGLPGALPHINKRAVDYGIKAGLALNCSITHIGRMDRKHIFYPDNSRNYQITQDELPLCTNGYIEIELEDGSKKKIGVERIHIEEDAGKLLHTNAGTLVDFNRCGVPLAEIVSKPDMRSPREAVTYLEELKSILSCVGVSDCKMEEGSLRCDANISVMKKGAKEFGVRTEIKNMNSFKAVEKALNYEYERHIKAIESGEKLTQETRRWDDAKNETAPMRSKEEANDYRYFPEGDLVTLNIDDEWIESIRKTIPELPYQKRERFIKEFGIPKYDASVLTLTMSMADFFEKTAKISGDAKSASNWLMGDISKIMKENYVWIEDLKFTPEQLSELIKLINEGTVSNAIGKKVIIKMFETGKSPKNIIEEEGLIQNSNEDEILNIVKEVLSENEKSIEDYKNGKNRVVGFLIGLVMKKTKGKANPKIVNKLMIDELNKQ</sequence>